<dbReference type="EC" id="3.4.17.-" evidence="1"/>
<dbReference type="EMBL" id="AE005174">
    <property type="protein sequence ID" value="AAG56476.1"/>
    <property type="status" value="ALT_INIT"/>
    <property type="molecule type" value="Genomic_DNA"/>
</dbReference>
<dbReference type="EMBL" id="BA000007">
    <property type="protein sequence ID" value="BAB35328.2"/>
    <property type="molecule type" value="Genomic_DNA"/>
</dbReference>
<dbReference type="PIR" id="A99867">
    <property type="entry name" value="A99867"/>
</dbReference>
<dbReference type="PIR" id="H85751">
    <property type="entry name" value="H85751"/>
</dbReference>
<dbReference type="RefSeq" id="NP_309932.2">
    <property type="nucleotide sequence ID" value="NC_002695.1"/>
</dbReference>
<dbReference type="RefSeq" id="WP_000219122.1">
    <property type="nucleotide sequence ID" value="NZ_VOAI01000015.1"/>
</dbReference>
<dbReference type="PDB" id="5HXD">
    <property type="method" value="X-ray"/>
    <property type="resolution" value="2.60 A"/>
    <property type="chains" value="A/B=1-237"/>
</dbReference>
<dbReference type="PDBsum" id="5HXD"/>
<dbReference type="SMR" id="P0ACV7"/>
<dbReference type="STRING" id="155864.Z2448"/>
<dbReference type="MEROPS" id="M14.034"/>
<dbReference type="GeneID" id="912455"/>
<dbReference type="GeneID" id="93775454"/>
<dbReference type="KEGG" id="ece:Z2448"/>
<dbReference type="KEGG" id="ecs:ECs_1905"/>
<dbReference type="PATRIC" id="fig|386585.9.peg.2010"/>
<dbReference type="eggNOG" id="COG2866">
    <property type="taxonomic scope" value="Bacteria"/>
</dbReference>
<dbReference type="HOGENOM" id="CLU_102905_0_0_6"/>
<dbReference type="OMA" id="ACIEDPH"/>
<dbReference type="UniPathway" id="UPA00549"/>
<dbReference type="Proteomes" id="UP000000558">
    <property type="component" value="Chromosome"/>
</dbReference>
<dbReference type="Proteomes" id="UP000002519">
    <property type="component" value="Chromosome"/>
</dbReference>
<dbReference type="GO" id="GO:0005737">
    <property type="term" value="C:cytoplasm"/>
    <property type="evidence" value="ECO:0007669"/>
    <property type="project" value="UniProtKB-SubCell"/>
</dbReference>
<dbReference type="GO" id="GO:0004040">
    <property type="term" value="F:amidase activity"/>
    <property type="evidence" value="ECO:0007669"/>
    <property type="project" value="InterPro"/>
</dbReference>
<dbReference type="GO" id="GO:0061473">
    <property type="term" value="F:murein tripeptide carboxypeptidase activity"/>
    <property type="evidence" value="ECO:0007669"/>
    <property type="project" value="UniProtKB-UniRule"/>
</dbReference>
<dbReference type="GO" id="GO:0008270">
    <property type="term" value="F:zinc ion binding"/>
    <property type="evidence" value="ECO:0007669"/>
    <property type="project" value="UniProtKB-UniRule"/>
</dbReference>
<dbReference type="GO" id="GO:0016998">
    <property type="term" value="P:cell wall macromolecule catabolic process"/>
    <property type="evidence" value="ECO:0007669"/>
    <property type="project" value="UniProtKB-UniPathway"/>
</dbReference>
<dbReference type="GO" id="GO:0071555">
    <property type="term" value="P:cell wall organization"/>
    <property type="evidence" value="ECO:0007669"/>
    <property type="project" value="UniProtKB-KW"/>
</dbReference>
<dbReference type="GO" id="GO:0009253">
    <property type="term" value="P:peptidoglycan catabolic process"/>
    <property type="evidence" value="ECO:0007669"/>
    <property type="project" value="UniProtKB-UniRule"/>
</dbReference>
<dbReference type="GO" id="GO:0006508">
    <property type="term" value="P:proteolysis"/>
    <property type="evidence" value="ECO:0007669"/>
    <property type="project" value="UniProtKB-KW"/>
</dbReference>
<dbReference type="CDD" id="cd06904">
    <property type="entry name" value="M14_MpaA-like"/>
    <property type="match status" value="1"/>
</dbReference>
<dbReference type="FunFam" id="3.40.630.10:FF:000032">
    <property type="entry name" value="Murein peptide amidase A"/>
    <property type="match status" value="1"/>
</dbReference>
<dbReference type="Gene3D" id="3.40.630.10">
    <property type="entry name" value="Zn peptidases"/>
    <property type="match status" value="1"/>
</dbReference>
<dbReference type="HAMAP" id="MF_02211">
    <property type="entry name" value="MpaA_carboxypeptidase"/>
    <property type="match status" value="1"/>
</dbReference>
<dbReference type="InterPro" id="IPR043691">
    <property type="entry name" value="MpaA"/>
</dbReference>
<dbReference type="InterPro" id="IPR000834">
    <property type="entry name" value="Peptidase_M14"/>
</dbReference>
<dbReference type="NCBIfam" id="NF007897">
    <property type="entry name" value="PRK10602.1"/>
    <property type="match status" value="1"/>
</dbReference>
<dbReference type="Pfam" id="PF00246">
    <property type="entry name" value="Peptidase_M14"/>
    <property type="match status" value="1"/>
</dbReference>
<dbReference type="SUPFAM" id="SSF53187">
    <property type="entry name" value="Zn-dependent exopeptidases"/>
    <property type="match status" value="1"/>
</dbReference>
<dbReference type="PROSITE" id="PS52035">
    <property type="entry name" value="PEPTIDASE_M14"/>
    <property type="match status" value="1"/>
</dbReference>
<name>MPAA_ECO57</name>
<organism>
    <name type="scientific">Escherichia coli O157:H7</name>
    <dbReference type="NCBI Taxonomy" id="83334"/>
    <lineage>
        <taxon>Bacteria</taxon>
        <taxon>Pseudomonadati</taxon>
        <taxon>Pseudomonadota</taxon>
        <taxon>Gammaproteobacteria</taxon>
        <taxon>Enterobacterales</taxon>
        <taxon>Enterobacteriaceae</taxon>
        <taxon>Escherichia</taxon>
    </lineage>
</organism>
<reference key="1">
    <citation type="journal article" date="2001" name="Nature">
        <title>Genome sequence of enterohaemorrhagic Escherichia coli O157:H7.</title>
        <authorList>
            <person name="Perna N.T."/>
            <person name="Plunkett G. III"/>
            <person name="Burland V."/>
            <person name="Mau B."/>
            <person name="Glasner J.D."/>
            <person name="Rose D.J."/>
            <person name="Mayhew G.F."/>
            <person name="Evans P.S."/>
            <person name="Gregor J."/>
            <person name="Kirkpatrick H.A."/>
            <person name="Posfai G."/>
            <person name="Hackett J."/>
            <person name="Klink S."/>
            <person name="Boutin A."/>
            <person name="Shao Y."/>
            <person name="Miller L."/>
            <person name="Grotbeck E.J."/>
            <person name="Davis N.W."/>
            <person name="Lim A."/>
            <person name="Dimalanta E.T."/>
            <person name="Potamousis K."/>
            <person name="Apodaca J."/>
            <person name="Anantharaman T.S."/>
            <person name="Lin J."/>
            <person name="Yen G."/>
            <person name="Schwartz D.C."/>
            <person name="Welch R.A."/>
            <person name="Blattner F.R."/>
        </authorList>
    </citation>
    <scope>NUCLEOTIDE SEQUENCE [LARGE SCALE GENOMIC DNA]</scope>
    <source>
        <strain>O157:H7 / EDL933 / ATCC 700927 / EHEC</strain>
    </source>
</reference>
<reference key="2">
    <citation type="journal article" date="2001" name="DNA Res.">
        <title>Complete genome sequence of enterohemorrhagic Escherichia coli O157:H7 and genomic comparison with a laboratory strain K-12.</title>
        <authorList>
            <person name="Hayashi T."/>
            <person name="Makino K."/>
            <person name="Ohnishi M."/>
            <person name="Kurokawa K."/>
            <person name="Ishii K."/>
            <person name="Yokoyama K."/>
            <person name="Han C.-G."/>
            <person name="Ohtsubo E."/>
            <person name="Nakayama K."/>
            <person name="Murata T."/>
            <person name="Tanaka M."/>
            <person name="Tobe T."/>
            <person name="Iida T."/>
            <person name="Takami H."/>
            <person name="Honda T."/>
            <person name="Sasakawa C."/>
            <person name="Ogasawara N."/>
            <person name="Yasunaga T."/>
            <person name="Kuhara S."/>
            <person name="Shiba T."/>
            <person name="Hattori M."/>
            <person name="Shinagawa H."/>
        </authorList>
    </citation>
    <scope>NUCLEOTIDE SEQUENCE [LARGE SCALE GENOMIC DNA]</scope>
    <source>
        <strain>O157:H7 / Sakai / RIMD 0509952 / EHEC</strain>
    </source>
</reference>
<reference evidence="4" key="3">
    <citation type="journal article" date="2017" name="Protein Pept. Lett.">
        <title>Crystal structure of murein-tripeptide amidase MpaA from Escherichia coli O157 at 2.6 Aa resolution.</title>
        <authorList>
            <person name="Ma Y."/>
            <person name="Bai G."/>
            <person name="Cui Y."/>
            <person name="Zhao J."/>
            <person name="Yuan Z."/>
            <person name="Liu X."/>
        </authorList>
    </citation>
    <scope>X-RAY CRYSTALLOGRAPHY (2.60 ANGSTROMS) OF 1-237</scope>
</reference>
<protein>
    <recommendedName>
        <fullName evidence="1">Murein peptide amidase A</fullName>
        <ecNumber evidence="1">3.4.17.-</ecNumber>
    </recommendedName>
    <alternativeName>
        <fullName evidence="1">Gamma-D-Glu-Dap amidase</fullName>
    </alternativeName>
    <alternativeName>
        <fullName evidence="1">Zinc metallocarboxypeptidase MpaA</fullName>
    </alternativeName>
</protein>
<proteinExistence type="evidence at protein level"/>
<evidence type="ECO:0000255" key="1">
    <source>
        <dbReference type="HAMAP-Rule" id="MF_02211"/>
    </source>
</evidence>
<evidence type="ECO:0000255" key="2">
    <source>
        <dbReference type="PROSITE-ProRule" id="PRU01379"/>
    </source>
</evidence>
<evidence type="ECO:0000305" key="3"/>
<evidence type="ECO:0007744" key="4">
    <source>
        <dbReference type="PDB" id="5HXD"/>
    </source>
</evidence>
<evidence type="ECO:0007829" key="5">
    <source>
        <dbReference type="PDB" id="5HXD"/>
    </source>
</evidence>
<sequence length="242" mass="26558">MTVTRPRAERGAFPPGTEHYGRSLLGAPLIWFPAPAASRESGLILAGTHGDENSSVVTLSCALRTLTPSLRRHHVVLCVNPDGCQLGLRANANGVDLNRNFPAANWKEGETVYRWNSAAEERDVVLLTGDKPGSEPETQALCQLIHRIQPAWVVSFHDPLACIEDPRHSELGEWLAQAFELPLVTSVGYETPGSFGSWCADLNLHCITAEFPPISSDEASEKYLFAMANLLRWHPKDAIRPS</sequence>
<feature type="chain" id="PRO_0000168895" description="Murein peptide amidase A">
    <location>
        <begin position="1"/>
        <end position="242"/>
    </location>
</feature>
<feature type="domain" description="Peptidase M14" evidence="2">
    <location>
        <begin position="1"/>
        <end position="234"/>
    </location>
</feature>
<feature type="active site" description="Proton donor/acceptor" evidence="2">
    <location>
        <position position="210"/>
    </location>
</feature>
<feature type="binding site" evidence="2">
    <location>
        <position position="49"/>
    </location>
    <ligand>
        <name>Zn(2+)</name>
        <dbReference type="ChEBI" id="CHEBI:29105"/>
        <note>catalytic</note>
    </ligand>
</feature>
<feature type="binding site" evidence="2">
    <location>
        <position position="52"/>
    </location>
    <ligand>
        <name>Zn(2+)</name>
        <dbReference type="ChEBI" id="CHEBI:29105"/>
        <note>catalytic</note>
    </ligand>
</feature>
<feature type="binding site" evidence="2">
    <location>
        <position position="157"/>
    </location>
    <ligand>
        <name>Zn(2+)</name>
        <dbReference type="ChEBI" id="CHEBI:29105"/>
        <note>catalytic</note>
    </ligand>
</feature>
<feature type="helix" evidence="5">
    <location>
        <begin position="7"/>
        <end position="9"/>
    </location>
</feature>
<feature type="strand" evidence="5">
    <location>
        <begin position="18"/>
        <end position="22"/>
    </location>
</feature>
<feature type="strand" evidence="5">
    <location>
        <begin position="28"/>
        <end position="32"/>
    </location>
</feature>
<feature type="strand" evidence="5">
    <location>
        <begin position="43"/>
        <end position="45"/>
    </location>
</feature>
<feature type="helix" evidence="5">
    <location>
        <begin position="53"/>
        <end position="65"/>
    </location>
</feature>
<feature type="helix" evidence="5">
    <location>
        <begin position="68"/>
        <end position="70"/>
    </location>
</feature>
<feature type="strand" evidence="5">
    <location>
        <begin position="73"/>
        <end position="77"/>
    </location>
</feature>
<feature type="helix" evidence="5">
    <location>
        <begin position="81"/>
        <end position="85"/>
    </location>
</feature>
<feature type="helix" evidence="5">
    <location>
        <begin position="97"/>
        <end position="99"/>
    </location>
</feature>
<feature type="strand" evidence="5">
    <location>
        <begin position="109"/>
        <end position="113"/>
    </location>
</feature>
<feature type="strand" evidence="5">
    <location>
        <begin position="124"/>
        <end position="127"/>
    </location>
</feature>
<feature type="helix" evidence="5">
    <location>
        <begin position="136"/>
        <end position="148"/>
    </location>
</feature>
<feature type="strand" evidence="5">
    <location>
        <begin position="153"/>
        <end position="160"/>
    </location>
</feature>
<feature type="strand" evidence="5">
    <location>
        <begin position="162"/>
        <end position="164"/>
    </location>
</feature>
<feature type="helix" evidence="5">
    <location>
        <begin position="170"/>
        <end position="178"/>
    </location>
</feature>
<feature type="strand" evidence="5">
    <location>
        <begin position="183"/>
        <end position="185"/>
    </location>
</feature>
<feature type="helix" evidence="5">
    <location>
        <begin position="195"/>
        <end position="201"/>
    </location>
</feature>
<feature type="strand" evidence="5">
    <location>
        <begin position="206"/>
        <end position="210"/>
    </location>
</feature>
<feature type="helix" evidence="5">
    <location>
        <begin position="216"/>
        <end position="222"/>
    </location>
</feature>
<feature type="helix" evidence="5">
    <location>
        <begin position="224"/>
        <end position="230"/>
    </location>
</feature>
<accession>P0ACV7</accession>
<accession>P51983</accession>
<accession>P77675</accession>
<gene>
    <name evidence="1" type="primary">mpaA</name>
    <name type="ordered locus">Z2448</name>
    <name type="ordered locus">ECs1905</name>
</gene>
<comment type="function">
    <text evidence="1">Involved in muropeptide degradation. Catalyzes the hydrolysis of the gamma-D-glutamyl-diaminopimelic acid (gamma-D-Glu-Dap) amide bond in the murein tripeptide L-alanyl-gamma-D-glutamyl-meso-diaminopimelic acid, leading to the formation of L-Ala-gamma-D-Glu and Dap.</text>
</comment>
<comment type="catalytic activity">
    <reaction evidence="1">
        <text>L-alanyl-gamma-D-glutamyl-meso-2,6-diaminopimelate + H2O = L-alanyl-D-glutamate + meso-2,6-diaminopimelate</text>
        <dbReference type="Rhea" id="RHEA:28398"/>
        <dbReference type="ChEBI" id="CHEBI:15377"/>
        <dbReference type="ChEBI" id="CHEBI:57791"/>
        <dbReference type="ChEBI" id="CHEBI:61395"/>
        <dbReference type="ChEBI" id="CHEBI:61401"/>
    </reaction>
</comment>
<comment type="cofactor">
    <cofactor evidence="1">
        <name>Zn(2+)</name>
        <dbReference type="ChEBI" id="CHEBI:29105"/>
    </cofactor>
    <text evidence="1">Binds 1 zinc ion per subunit.</text>
</comment>
<comment type="pathway">
    <text evidence="1">Cell wall degradation; peptidoglycan degradation.</text>
</comment>
<comment type="subunit">
    <text evidence="1">Homodimer.</text>
</comment>
<comment type="subcellular location">
    <subcellularLocation>
        <location evidence="1">Cytoplasm</location>
    </subcellularLocation>
</comment>
<comment type="similarity">
    <text evidence="1">Belongs to the peptidase M14 family.</text>
</comment>
<comment type="sequence caution" evidence="3">
    <conflict type="erroneous initiation">
        <sequence resource="EMBL-CDS" id="AAG56476"/>
    </conflict>
    <text>Extended N-terminus.</text>
</comment>
<keyword id="KW-0002">3D-structure</keyword>
<keyword id="KW-0121">Carboxypeptidase</keyword>
<keyword id="KW-0961">Cell wall biogenesis/degradation</keyword>
<keyword id="KW-0963">Cytoplasm</keyword>
<keyword id="KW-0378">Hydrolase</keyword>
<keyword id="KW-0479">Metal-binding</keyword>
<keyword id="KW-0482">Metalloprotease</keyword>
<keyword id="KW-0645">Protease</keyword>
<keyword id="KW-1185">Reference proteome</keyword>
<keyword id="KW-0862">Zinc</keyword>